<name>TPIS1_LISMO</name>
<dbReference type="EC" id="5.3.1.1" evidence="1"/>
<dbReference type="EMBL" id="AL591983">
    <property type="protein sequence ID" value="CAD00535.1"/>
    <property type="molecule type" value="Genomic_DNA"/>
</dbReference>
<dbReference type="PIR" id="AI1381">
    <property type="entry name" value="AI1381"/>
</dbReference>
<dbReference type="SMR" id="Q8Y4I3"/>
<dbReference type="STRING" id="169963.gene:17595167"/>
<dbReference type="PaxDb" id="169963-lmo2457"/>
<dbReference type="EnsemblBacteria" id="CAD00535">
    <property type="protein sequence ID" value="CAD00535"/>
    <property type="gene ID" value="CAD00535"/>
</dbReference>
<dbReference type="KEGG" id="lmo:lmo2457"/>
<dbReference type="PATRIC" id="fig|169963.11.peg.2516"/>
<dbReference type="eggNOG" id="COG0149">
    <property type="taxonomic scope" value="Bacteria"/>
</dbReference>
<dbReference type="HOGENOM" id="CLU_024251_2_3_9"/>
<dbReference type="OrthoDB" id="9809429at2"/>
<dbReference type="PhylomeDB" id="Q8Y4I3"/>
<dbReference type="BioCyc" id="LMON169963:LMO2457-MONOMER"/>
<dbReference type="UniPathway" id="UPA00109">
    <property type="reaction ID" value="UER00189"/>
</dbReference>
<dbReference type="UniPathway" id="UPA00138"/>
<dbReference type="Proteomes" id="UP000000817">
    <property type="component" value="Chromosome"/>
</dbReference>
<dbReference type="GO" id="GO:0005829">
    <property type="term" value="C:cytosol"/>
    <property type="evidence" value="ECO:0000318"/>
    <property type="project" value="GO_Central"/>
</dbReference>
<dbReference type="GO" id="GO:0004807">
    <property type="term" value="F:triose-phosphate isomerase activity"/>
    <property type="evidence" value="ECO:0000318"/>
    <property type="project" value="GO_Central"/>
</dbReference>
<dbReference type="GO" id="GO:0006094">
    <property type="term" value="P:gluconeogenesis"/>
    <property type="evidence" value="ECO:0000318"/>
    <property type="project" value="GO_Central"/>
</dbReference>
<dbReference type="GO" id="GO:0046166">
    <property type="term" value="P:glyceraldehyde-3-phosphate biosynthetic process"/>
    <property type="evidence" value="ECO:0000318"/>
    <property type="project" value="GO_Central"/>
</dbReference>
<dbReference type="GO" id="GO:0019563">
    <property type="term" value="P:glycerol catabolic process"/>
    <property type="evidence" value="ECO:0000318"/>
    <property type="project" value="GO_Central"/>
</dbReference>
<dbReference type="GO" id="GO:0006096">
    <property type="term" value="P:glycolytic process"/>
    <property type="evidence" value="ECO:0000318"/>
    <property type="project" value="GO_Central"/>
</dbReference>
<dbReference type="CDD" id="cd00311">
    <property type="entry name" value="TIM"/>
    <property type="match status" value="1"/>
</dbReference>
<dbReference type="FunFam" id="3.20.20.70:FF:000016">
    <property type="entry name" value="Triosephosphate isomerase"/>
    <property type="match status" value="1"/>
</dbReference>
<dbReference type="Gene3D" id="3.20.20.70">
    <property type="entry name" value="Aldolase class I"/>
    <property type="match status" value="1"/>
</dbReference>
<dbReference type="HAMAP" id="MF_00147_B">
    <property type="entry name" value="TIM_B"/>
    <property type="match status" value="1"/>
</dbReference>
<dbReference type="InterPro" id="IPR013785">
    <property type="entry name" value="Aldolase_TIM"/>
</dbReference>
<dbReference type="InterPro" id="IPR035990">
    <property type="entry name" value="TIM_sf"/>
</dbReference>
<dbReference type="InterPro" id="IPR022896">
    <property type="entry name" value="TrioseP_Isoase_bac/euk"/>
</dbReference>
<dbReference type="InterPro" id="IPR000652">
    <property type="entry name" value="Triosephosphate_isomerase"/>
</dbReference>
<dbReference type="InterPro" id="IPR020861">
    <property type="entry name" value="Triosephosphate_isomerase_AS"/>
</dbReference>
<dbReference type="NCBIfam" id="TIGR00419">
    <property type="entry name" value="tim"/>
    <property type="match status" value="1"/>
</dbReference>
<dbReference type="PANTHER" id="PTHR21139">
    <property type="entry name" value="TRIOSEPHOSPHATE ISOMERASE"/>
    <property type="match status" value="1"/>
</dbReference>
<dbReference type="PANTHER" id="PTHR21139:SF42">
    <property type="entry name" value="TRIOSEPHOSPHATE ISOMERASE"/>
    <property type="match status" value="1"/>
</dbReference>
<dbReference type="Pfam" id="PF00121">
    <property type="entry name" value="TIM"/>
    <property type="match status" value="1"/>
</dbReference>
<dbReference type="SUPFAM" id="SSF51351">
    <property type="entry name" value="Triosephosphate isomerase (TIM)"/>
    <property type="match status" value="1"/>
</dbReference>
<dbReference type="PROSITE" id="PS00171">
    <property type="entry name" value="TIM_1"/>
    <property type="match status" value="1"/>
</dbReference>
<dbReference type="PROSITE" id="PS51440">
    <property type="entry name" value="TIM_2"/>
    <property type="match status" value="1"/>
</dbReference>
<accession>Q8Y4I3</accession>
<reference key="1">
    <citation type="journal article" date="2001" name="Science">
        <title>Comparative genomics of Listeria species.</title>
        <authorList>
            <person name="Glaser P."/>
            <person name="Frangeul L."/>
            <person name="Buchrieser C."/>
            <person name="Rusniok C."/>
            <person name="Amend A."/>
            <person name="Baquero F."/>
            <person name="Berche P."/>
            <person name="Bloecker H."/>
            <person name="Brandt P."/>
            <person name="Chakraborty T."/>
            <person name="Charbit A."/>
            <person name="Chetouani F."/>
            <person name="Couve E."/>
            <person name="de Daruvar A."/>
            <person name="Dehoux P."/>
            <person name="Domann E."/>
            <person name="Dominguez-Bernal G."/>
            <person name="Duchaud E."/>
            <person name="Durant L."/>
            <person name="Dussurget O."/>
            <person name="Entian K.-D."/>
            <person name="Fsihi H."/>
            <person name="Garcia-del Portillo F."/>
            <person name="Garrido P."/>
            <person name="Gautier L."/>
            <person name="Goebel W."/>
            <person name="Gomez-Lopez N."/>
            <person name="Hain T."/>
            <person name="Hauf J."/>
            <person name="Jackson D."/>
            <person name="Jones L.-M."/>
            <person name="Kaerst U."/>
            <person name="Kreft J."/>
            <person name="Kuhn M."/>
            <person name="Kunst F."/>
            <person name="Kurapkat G."/>
            <person name="Madueno E."/>
            <person name="Maitournam A."/>
            <person name="Mata Vicente J."/>
            <person name="Ng E."/>
            <person name="Nedjari H."/>
            <person name="Nordsiek G."/>
            <person name="Novella S."/>
            <person name="de Pablos B."/>
            <person name="Perez-Diaz J.-C."/>
            <person name="Purcell R."/>
            <person name="Remmel B."/>
            <person name="Rose M."/>
            <person name="Schlueter T."/>
            <person name="Simoes N."/>
            <person name="Tierrez A."/>
            <person name="Vazquez-Boland J.-A."/>
            <person name="Voss H."/>
            <person name="Wehland J."/>
            <person name="Cossart P."/>
        </authorList>
    </citation>
    <scope>NUCLEOTIDE SEQUENCE [LARGE SCALE GENOMIC DNA]</scope>
    <source>
        <strain>ATCC BAA-679 / EGD-e</strain>
    </source>
</reference>
<gene>
    <name evidence="1" type="primary">tpiA1</name>
    <name type="synonym">tpi</name>
    <name type="ordered locus">lmo2457</name>
</gene>
<feature type="chain" id="PRO_0000090242" description="Triosephosphate isomerase 1">
    <location>
        <begin position="1"/>
        <end position="251"/>
    </location>
</feature>
<feature type="active site" description="Electrophile" evidence="1">
    <location>
        <position position="95"/>
    </location>
</feature>
<feature type="active site" description="Proton acceptor" evidence="1">
    <location>
        <position position="167"/>
    </location>
</feature>
<feature type="binding site" evidence="1">
    <location>
        <begin position="9"/>
        <end position="11"/>
    </location>
    <ligand>
        <name>substrate</name>
    </ligand>
</feature>
<feature type="binding site" evidence="1">
    <location>
        <position position="173"/>
    </location>
    <ligand>
        <name>substrate</name>
    </ligand>
</feature>
<feature type="binding site" evidence="1">
    <location>
        <position position="213"/>
    </location>
    <ligand>
        <name>substrate</name>
    </ligand>
</feature>
<feature type="binding site" evidence="1">
    <location>
        <begin position="234"/>
        <end position="235"/>
    </location>
    <ligand>
        <name>substrate</name>
    </ligand>
</feature>
<sequence length="251" mass="26878">MRKPIIAGNWKMNKTAAKAGQFAEDVKNNVPSSDAVESVVAAPALFLQELVRLTEGTDLRVSAQNCYFEDEGAFTGEISPFALADLGVSYVIIGHSERREYFHETDEDINKKAHAIFKHGMTPIICCGETLDQREAGQTDTWVRGQIRAALAGLTEEQVIKSVIAYEPIWAIGTGKSSTSADANETCAVIRAEVADAVSQKAADAVRIQYGGSVKPENIADYLAESDIDGALVGGASLEPASFLALLEAVK</sequence>
<comment type="function">
    <text evidence="1">Involved in the gluconeogenesis. Catalyzes stereospecifically the conversion of dihydroxyacetone phosphate (DHAP) to D-glyceraldehyde-3-phosphate (G3P).</text>
</comment>
<comment type="catalytic activity">
    <reaction evidence="1">
        <text>D-glyceraldehyde 3-phosphate = dihydroxyacetone phosphate</text>
        <dbReference type="Rhea" id="RHEA:18585"/>
        <dbReference type="ChEBI" id="CHEBI:57642"/>
        <dbReference type="ChEBI" id="CHEBI:59776"/>
        <dbReference type="EC" id="5.3.1.1"/>
    </reaction>
</comment>
<comment type="pathway">
    <text evidence="1">Carbohydrate biosynthesis; gluconeogenesis.</text>
</comment>
<comment type="pathway">
    <text evidence="1">Carbohydrate degradation; glycolysis; D-glyceraldehyde 3-phosphate from glycerone phosphate: step 1/1.</text>
</comment>
<comment type="subunit">
    <text evidence="1">Homodimer.</text>
</comment>
<comment type="subcellular location">
    <subcellularLocation>
        <location evidence="1">Cytoplasm</location>
    </subcellularLocation>
</comment>
<comment type="similarity">
    <text evidence="1">Belongs to the triosephosphate isomerase family.</text>
</comment>
<evidence type="ECO:0000255" key="1">
    <source>
        <dbReference type="HAMAP-Rule" id="MF_00147"/>
    </source>
</evidence>
<keyword id="KW-0963">Cytoplasm</keyword>
<keyword id="KW-0312">Gluconeogenesis</keyword>
<keyword id="KW-0324">Glycolysis</keyword>
<keyword id="KW-0413">Isomerase</keyword>
<keyword id="KW-1185">Reference proteome</keyword>
<protein>
    <recommendedName>
        <fullName evidence="1">Triosephosphate isomerase 1</fullName>
        <shortName evidence="1">TIM 1</shortName>
        <shortName evidence="1">TPI 1</shortName>
        <ecNumber evidence="1">5.3.1.1</ecNumber>
    </recommendedName>
    <alternativeName>
        <fullName evidence="1">Triose-phosphate isomerase 1</fullName>
    </alternativeName>
</protein>
<proteinExistence type="inferred from homology"/>
<organism>
    <name type="scientific">Listeria monocytogenes serovar 1/2a (strain ATCC BAA-679 / EGD-e)</name>
    <dbReference type="NCBI Taxonomy" id="169963"/>
    <lineage>
        <taxon>Bacteria</taxon>
        <taxon>Bacillati</taxon>
        <taxon>Bacillota</taxon>
        <taxon>Bacilli</taxon>
        <taxon>Bacillales</taxon>
        <taxon>Listeriaceae</taxon>
        <taxon>Listeria</taxon>
    </lineage>
</organism>